<feature type="initiator methionine" description="Removed" evidence="9">
    <location>
        <position position="1"/>
    </location>
</feature>
<feature type="chain" id="PRO_0000438688" description="DnaJ homolog subfamily B member 2">
    <location>
        <begin position="2"/>
        <end position="321"/>
    </location>
</feature>
<feature type="propeptide" id="PRO_0000438689" description="Removed in mature form" evidence="1">
    <location>
        <begin position="322"/>
        <end position="324"/>
    </location>
</feature>
<feature type="domain" description="J" evidence="3">
    <location>
        <begin position="3"/>
        <end position="69"/>
    </location>
</feature>
<feature type="domain" description="UIM 1" evidence="2">
    <location>
        <begin position="207"/>
        <end position="226"/>
    </location>
</feature>
<feature type="domain" description="UIM 2" evidence="2">
    <location>
        <begin position="250"/>
        <end position="269"/>
    </location>
</feature>
<feature type="region of interest" description="Disordered" evidence="4">
    <location>
        <begin position="70"/>
        <end position="91"/>
    </location>
</feature>
<feature type="region of interest" description="Disordered" evidence="4">
    <location>
        <begin position="218"/>
        <end position="324"/>
    </location>
</feature>
<feature type="short sequence motif" description="CAAX motif" evidence="1">
    <location>
        <begin position="321"/>
        <end position="324"/>
    </location>
</feature>
<feature type="compositionally biased region" description="Basic and acidic residues" evidence="4">
    <location>
        <begin position="314"/>
        <end position="324"/>
    </location>
</feature>
<feature type="modified residue" description="N-acetylalanine" evidence="9">
    <location>
        <position position="2"/>
    </location>
</feature>
<feature type="modified residue" description="Phosphoserine" evidence="10">
    <location>
        <position position="311"/>
    </location>
</feature>
<feature type="modified residue" description="Cysteine methyl ester" evidence="1">
    <location>
        <position position="321"/>
    </location>
</feature>
<feature type="lipid moiety-binding region" description="S-geranylgeranyl cysteine" evidence="1">
    <location>
        <position position="321"/>
    </location>
</feature>
<feature type="splice variant" id="VSP_058708" description="In isoform 3.">
    <original>KHKREIYDRYGREGLTGAG</original>
    <variation>R</variation>
    <location>
        <begin position="59"/>
        <end position="77"/>
    </location>
</feature>
<feature type="splice variant" id="VSP_058709" description="In isoform 3 and isoform 2.">
    <original>GGR</original>
    <variation>DVF</variation>
    <location>
        <begin position="275"/>
        <end position="277"/>
    </location>
</feature>
<feature type="splice variant" id="VSP_058710" description="In isoform 3 and isoform 2.">
    <location>
        <begin position="278"/>
        <end position="324"/>
    </location>
</feature>
<feature type="sequence conflict" description="In Ref. 3; AAH11090." evidence="6" ref="3">
    <original>S</original>
    <variation>F</variation>
    <location>
        <position position="15"/>
    </location>
</feature>
<feature type="sequence conflict" description="In Ref. 1; BAA88306." evidence="6" ref="1">
    <original>V</original>
    <variation>F</variation>
    <location>
        <position position="102"/>
    </location>
</feature>
<feature type="sequence conflict" description="In Ref. 1; BAA88306." evidence="6" ref="1">
    <original>D</original>
    <variation>N</variation>
    <location>
        <position position="111"/>
    </location>
</feature>
<feature type="sequence conflict" description="In Ref. 1; BAA88306." evidence="6" ref="1">
    <original>R</original>
    <variation>K</variation>
    <location>
        <position position="183"/>
    </location>
</feature>
<sequence length="324" mass="35593">MASYYEILDVPRSASPDDIKKAYRKKALQWHPDKNPDNKEFAEKKFKEVAEAYEVLSDKHKREIYDRYGREGLTGAGSGPSRSETGGAGPGFTFTFRSPEEVFREFFGSGDPFSELFDDLGVFSELQNQGPRLTGPFFTFSSSFPANSDFSSSSFSFSPGAGAFRSVSTSTTFVQGRRITTRRIMENGQERVEVEEDGQLKSVSINGVPDDLALGLELSRREQQPSVAPGLGVMQVRPTSLSRPPDHDLSEDEDLQLAMAYSLSEMEAAGQKPAGGRGAQQRQHGQPKAQHRDLDVGGTHKSVRGEAAKLSPSSEEKASRCHIL</sequence>
<name>DNJB2_MOUSE</name>
<accession>Q9QYI5</accession>
<accession>Q3TB24</accession>
<accession>Q8BPF6</accession>
<accession>Q921S2</accession>
<organism>
    <name type="scientific">Mus musculus</name>
    <name type="common">Mouse</name>
    <dbReference type="NCBI Taxonomy" id="10090"/>
    <lineage>
        <taxon>Eukaryota</taxon>
        <taxon>Metazoa</taxon>
        <taxon>Chordata</taxon>
        <taxon>Craniata</taxon>
        <taxon>Vertebrata</taxon>
        <taxon>Euteleostomi</taxon>
        <taxon>Mammalia</taxon>
        <taxon>Eutheria</taxon>
        <taxon>Euarchontoglires</taxon>
        <taxon>Glires</taxon>
        <taxon>Rodentia</taxon>
        <taxon>Myomorpha</taxon>
        <taxon>Muroidea</taxon>
        <taxon>Muridae</taxon>
        <taxon>Murinae</taxon>
        <taxon>Mus</taxon>
        <taxon>Mus</taxon>
    </lineage>
</organism>
<keyword id="KW-0007">Acetylation</keyword>
<keyword id="KW-0025">Alternative splicing</keyword>
<keyword id="KW-0143">Chaperone</keyword>
<keyword id="KW-0963">Cytoplasm</keyword>
<keyword id="KW-0256">Endoplasmic reticulum</keyword>
<keyword id="KW-0449">Lipoprotein</keyword>
<keyword id="KW-0472">Membrane</keyword>
<keyword id="KW-0488">Methylation</keyword>
<keyword id="KW-0539">Nucleus</keyword>
<keyword id="KW-0597">Phosphoprotein</keyword>
<keyword id="KW-0636">Prenylation</keyword>
<keyword id="KW-1185">Reference proteome</keyword>
<keyword id="KW-0677">Repeat</keyword>
<keyword id="KW-0832">Ubl conjugation</keyword>
<reference key="1">
    <citation type="journal article" date="2000" name="Cell Stress Chaperones">
        <title>Mammalian HSP40/DNAJ homologs: cloning of novel cDNAs and a proposal for their classification and nomenclature.</title>
        <authorList>
            <person name="Ohtsuka K."/>
            <person name="Hata M."/>
        </authorList>
    </citation>
    <scope>NUCLEOTIDE SEQUENCE [MRNA] (ISOFORM 3)</scope>
    <source>
        <strain>C57BL/6J</strain>
    </source>
</reference>
<reference key="2">
    <citation type="journal article" date="2005" name="Science">
        <title>The transcriptional landscape of the mammalian genome.</title>
        <authorList>
            <person name="Carninci P."/>
            <person name="Kasukawa T."/>
            <person name="Katayama S."/>
            <person name="Gough J."/>
            <person name="Frith M.C."/>
            <person name="Maeda N."/>
            <person name="Oyama R."/>
            <person name="Ravasi T."/>
            <person name="Lenhard B."/>
            <person name="Wells C."/>
            <person name="Kodzius R."/>
            <person name="Shimokawa K."/>
            <person name="Bajic V.B."/>
            <person name="Brenner S.E."/>
            <person name="Batalov S."/>
            <person name="Forrest A.R."/>
            <person name="Zavolan M."/>
            <person name="Davis M.J."/>
            <person name="Wilming L.G."/>
            <person name="Aidinis V."/>
            <person name="Allen J.E."/>
            <person name="Ambesi-Impiombato A."/>
            <person name="Apweiler R."/>
            <person name="Aturaliya R.N."/>
            <person name="Bailey T.L."/>
            <person name="Bansal M."/>
            <person name="Baxter L."/>
            <person name="Beisel K.W."/>
            <person name="Bersano T."/>
            <person name="Bono H."/>
            <person name="Chalk A.M."/>
            <person name="Chiu K.P."/>
            <person name="Choudhary V."/>
            <person name="Christoffels A."/>
            <person name="Clutterbuck D.R."/>
            <person name="Crowe M.L."/>
            <person name="Dalla E."/>
            <person name="Dalrymple B.P."/>
            <person name="de Bono B."/>
            <person name="Della Gatta G."/>
            <person name="di Bernardo D."/>
            <person name="Down T."/>
            <person name="Engstrom P."/>
            <person name="Fagiolini M."/>
            <person name="Faulkner G."/>
            <person name="Fletcher C.F."/>
            <person name="Fukushima T."/>
            <person name="Furuno M."/>
            <person name="Futaki S."/>
            <person name="Gariboldi M."/>
            <person name="Georgii-Hemming P."/>
            <person name="Gingeras T.R."/>
            <person name="Gojobori T."/>
            <person name="Green R.E."/>
            <person name="Gustincich S."/>
            <person name="Harbers M."/>
            <person name="Hayashi Y."/>
            <person name="Hensch T.K."/>
            <person name="Hirokawa N."/>
            <person name="Hill D."/>
            <person name="Huminiecki L."/>
            <person name="Iacono M."/>
            <person name="Ikeo K."/>
            <person name="Iwama A."/>
            <person name="Ishikawa T."/>
            <person name="Jakt M."/>
            <person name="Kanapin A."/>
            <person name="Katoh M."/>
            <person name="Kawasawa Y."/>
            <person name="Kelso J."/>
            <person name="Kitamura H."/>
            <person name="Kitano H."/>
            <person name="Kollias G."/>
            <person name="Krishnan S.P."/>
            <person name="Kruger A."/>
            <person name="Kummerfeld S.K."/>
            <person name="Kurochkin I.V."/>
            <person name="Lareau L.F."/>
            <person name="Lazarevic D."/>
            <person name="Lipovich L."/>
            <person name="Liu J."/>
            <person name="Liuni S."/>
            <person name="McWilliam S."/>
            <person name="Madan Babu M."/>
            <person name="Madera M."/>
            <person name="Marchionni L."/>
            <person name="Matsuda H."/>
            <person name="Matsuzawa S."/>
            <person name="Miki H."/>
            <person name="Mignone F."/>
            <person name="Miyake S."/>
            <person name="Morris K."/>
            <person name="Mottagui-Tabar S."/>
            <person name="Mulder N."/>
            <person name="Nakano N."/>
            <person name="Nakauchi H."/>
            <person name="Ng P."/>
            <person name="Nilsson R."/>
            <person name="Nishiguchi S."/>
            <person name="Nishikawa S."/>
            <person name="Nori F."/>
            <person name="Ohara O."/>
            <person name="Okazaki Y."/>
            <person name="Orlando V."/>
            <person name="Pang K.C."/>
            <person name="Pavan W.J."/>
            <person name="Pavesi G."/>
            <person name="Pesole G."/>
            <person name="Petrovsky N."/>
            <person name="Piazza S."/>
            <person name="Reed J."/>
            <person name="Reid J.F."/>
            <person name="Ring B.Z."/>
            <person name="Ringwald M."/>
            <person name="Rost B."/>
            <person name="Ruan Y."/>
            <person name="Salzberg S.L."/>
            <person name="Sandelin A."/>
            <person name="Schneider C."/>
            <person name="Schoenbach C."/>
            <person name="Sekiguchi K."/>
            <person name="Semple C.A."/>
            <person name="Seno S."/>
            <person name="Sessa L."/>
            <person name="Sheng Y."/>
            <person name="Shibata Y."/>
            <person name="Shimada H."/>
            <person name="Shimada K."/>
            <person name="Silva D."/>
            <person name="Sinclair B."/>
            <person name="Sperling S."/>
            <person name="Stupka E."/>
            <person name="Sugiura K."/>
            <person name="Sultana R."/>
            <person name="Takenaka Y."/>
            <person name="Taki K."/>
            <person name="Tammoja K."/>
            <person name="Tan S.L."/>
            <person name="Tang S."/>
            <person name="Taylor M.S."/>
            <person name="Tegner J."/>
            <person name="Teichmann S.A."/>
            <person name="Ueda H.R."/>
            <person name="van Nimwegen E."/>
            <person name="Verardo R."/>
            <person name="Wei C.L."/>
            <person name="Yagi K."/>
            <person name="Yamanishi H."/>
            <person name="Zabarovsky E."/>
            <person name="Zhu S."/>
            <person name="Zimmer A."/>
            <person name="Hide W."/>
            <person name="Bult C."/>
            <person name="Grimmond S.M."/>
            <person name="Teasdale R.D."/>
            <person name="Liu E.T."/>
            <person name="Brusic V."/>
            <person name="Quackenbush J."/>
            <person name="Wahlestedt C."/>
            <person name="Mattick J.S."/>
            <person name="Hume D.A."/>
            <person name="Kai C."/>
            <person name="Sasaki D."/>
            <person name="Tomaru Y."/>
            <person name="Fukuda S."/>
            <person name="Kanamori-Katayama M."/>
            <person name="Suzuki M."/>
            <person name="Aoki J."/>
            <person name="Arakawa T."/>
            <person name="Iida J."/>
            <person name="Imamura K."/>
            <person name="Itoh M."/>
            <person name="Kato T."/>
            <person name="Kawaji H."/>
            <person name="Kawagashira N."/>
            <person name="Kawashima T."/>
            <person name="Kojima M."/>
            <person name="Kondo S."/>
            <person name="Konno H."/>
            <person name="Nakano K."/>
            <person name="Ninomiya N."/>
            <person name="Nishio T."/>
            <person name="Okada M."/>
            <person name="Plessy C."/>
            <person name="Shibata K."/>
            <person name="Shiraki T."/>
            <person name="Suzuki S."/>
            <person name="Tagami M."/>
            <person name="Waki K."/>
            <person name="Watahiki A."/>
            <person name="Okamura-Oho Y."/>
            <person name="Suzuki H."/>
            <person name="Kawai J."/>
            <person name="Hayashizaki Y."/>
        </authorList>
    </citation>
    <scope>NUCLEOTIDE SEQUENCE [LARGE SCALE MRNA] (ISOFORMS 1 AND 2)</scope>
    <source>
        <strain>C57BL/6J</strain>
        <strain>NOD</strain>
        <tissue>Spleen</tissue>
    </source>
</reference>
<reference key="3">
    <citation type="journal article" date="2004" name="Genome Res.">
        <title>The status, quality, and expansion of the NIH full-length cDNA project: the Mammalian Gene Collection (MGC).</title>
        <authorList>
            <consortium name="The MGC Project Team"/>
        </authorList>
    </citation>
    <scope>NUCLEOTIDE SEQUENCE [LARGE SCALE MRNA] (ISOFORM 2)</scope>
    <source>
        <strain>FVB/N</strain>
        <tissue>Mammary tumor</tissue>
    </source>
</reference>
<reference key="4">
    <citation type="journal article" date="2006" name="Mol. Cell. Proteomics">
        <title>Comprehensive identification of phosphorylation sites in postsynaptic density preparations.</title>
        <authorList>
            <person name="Trinidad J.C."/>
            <person name="Specht C.G."/>
            <person name="Thalhammer A."/>
            <person name="Schoepfer R."/>
            <person name="Burlingame A.L."/>
        </authorList>
    </citation>
    <scope>ACETYLATION [LARGE SCALE ANALYSIS] AT ALA-2</scope>
    <scope>CLEAVAGE OF INITIATOR METHIONINE [LARGE SCALE ANALYSIS]</scope>
    <scope>IDENTIFICATION BY MASS SPECTROMETRY [LARGE SCALE ANALYSIS]</scope>
    <source>
        <tissue>Brain</tissue>
    </source>
</reference>
<reference key="5">
    <citation type="journal article" date="2010" name="Cell">
        <title>A tissue-specific atlas of mouse protein phosphorylation and expression.</title>
        <authorList>
            <person name="Huttlin E.L."/>
            <person name="Jedrychowski M.P."/>
            <person name="Elias J.E."/>
            <person name="Goswami T."/>
            <person name="Rad R."/>
            <person name="Beausoleil S.A."/>
            <person name="Villen J."/>
            <person name="Haas W."/>
            <person name="Sowa M.E."/>
            <person name="Gygi S.P."/>
        </authorList>
    </citation>
    <scope>PHOSPHORYLATION [LARGE SCALE ANALYSIS] AT SER-311</scope>
    <scope>IDENTIFICATION BY MASS SPECTROMETRY [LARGE SCALE ANALYSIS]</scope>
    <source>
        <tissue>Brain</tissue>
        <tissue>Lung</tissue>
        <tissue>Spleen</tissue>
        <tissue>Testis</tissue>
    </source>
</reference>
<evidence type="ECO:0000250" key="1">
    <source>
        <dbReference type="UniProtKB" id="P25686"/>
    </source>
</evidence>
<evidence type="ECO:0000255" key="2">
    <source>
        <dbReference type="PROSITE-ProRule" id="PRU00213"/>
    </source>
</evidence>
<evidence type="ECO:0000255" key="3">
    <source>
        <dbReference type="PROSITE-ProRule" id="PRU00286"/>
    </source>
</evidence>
<evidence type="ECO:0000256" key="4">
    <source>
        <dbReference type="SAM" id="MobiDB-lite"/>
    </source>
</evidence>
<evidence type="ECO:0000303" key="5">
    <source>
    </source>
</evidence>
<evidence type="ECO:0000305" key="6"/>
<evidence type="ECO:0000312" key="7">
    <source>
        <dbReference type="EMBL" id="BAA88306.1"/>
    </source>
</evidence>
<evidence type="ECO:0000312" key="8">
    <source>
        <dbReference type="MGI" id="MGI:1928739"/>
    </source>
</evidence>
<evidence type="ECO:0007744" key="9">
    <source>
    </source>
</evidence>
<evidence type="ECO:0007744" key="10">
    <source>
    </source>
</evidence>
<dbReference type="EMBL" id="AB028858">
    <property type="protein sequence ID" value="BAA88306.1"/>
    <property type="molecule type" value="mRNA"/>
</dbReference>
<dbReference type="EMBL" id="AK076061">
    <property type="protein sequence ID" value="BAC36155.1"/>
    <property type="molecule type" value="mRNA"/>
</dbReference>
<dbReference type="EMBL" id="AK156083">
    <property type="protein sequence ID" value="BAE33579.1"/>
    <property type="molecule type" value="mRNA"/>
</dbReference>
<dbReference type="EMBL" id="AK171494">
    <property type="protein sequence ID" value="BAE42490.1"/>
    <property type="molecule type" value="mRNA"/>
</dbReference>
<dbReference type="EMBL" id="AC166150">
    <property type="status" value="NOT_ANNOTATED_CDS"/>
    <property type="molecule type" value="Genomic_DNA"/>
</dbReference>
<dbReference type="EMBL" id="BC011090">
    <property type="protein sequence ID" value="AAH11090.1"/>
    <property type="molecule type" value="mRNA"/>
</dbReference>
<dbReference type="CCDS" id="CCDS15068.1">
    <molecule id="Q9QYI5-2"/>
</dbReference>
<dbReference type="CCDS" id="CCDS35624.1">
    <molecule id="Q9QYI5-1"/>
</dbReference>
<dbReference type="CCDS" id="CCDS78622.1">
    <molecule id="Q9QYI5-3"/>
</dbReference>
<dbReference type="RefSeq" id="NP_001153355.1">
    <molecule id="Q9QYI5-3"/>
    <property type="nucleotide sequence ID" value="NM_001159883.1"/>
</dbReference>
<dbReference type="RefSeq" id="NP_001153356.1">
    <molecule id="Q9QYI5-1"/>
    <property type="nucleotide sequence ID" value="NM_001159884.1"/>
</dbReference>
<dbReference type="RefSeq" id="NP_001153357.1">
    <molecule id="Q9QYI5-1"/>
    <property type="nucleotide sequence ID" value="NM_001159885.1"/>
</dbReference>
<dbReference type="RefSeq" id="NP_064662.2">
    <molecule id="Q9QYI5-2"/>
    <property type="nucleotide sequence ID" value="NM_020266.2"/>
</dbReference>
<dbReference type="RefSeq" id="NP_835156.1">
    <molecule id="Q9QYI5-1"/>
    <property type="nucleotide sequence ID" value="NM_178055.4"/>
</dbReference>
<dbReference type="RefSeq" id="XP_036008395.1">
    <molecule id="Q9QYI5-2"/>
    <property type="nucleotide sequence ID" value="XM_036152502.1"/>
</dbReference>
<dbReference type="SMR" id="Q9QYI5"/>
<dbReference type="BioGRID" id="208186">
    <property type="interactions" value="5"/>
</dbReference>
<dbReference type="FunCoup" id="Q9QYI5">
    <property type="interactions" value="1796"/>
</dbReference>
<dbReference type="IntAct" id="Q9QYI5">
    <property type="interactions" value="1"/>
</dbReference>
<dbReference type="STRING" id="10090.ENSMUSP00000140566"/>
<dbReference type="iPTMnet" id="Q9QYI5"/>
<dbReference type="PhosphoSitePlus" id="Q9QYI5"/>
<dbReference type="PaxDb" id="10090-ENSMUSP00000140566"/>
<dbReference type="PeptideAtlas" id="Q9QYI5"/>
<dbReference type="ProteomicsDB" id="279743">
    <molecule id="Q9QYI5-3"/>
</dbReference>
<dbReference type="ProteomicsDB" id="279744">
    <molecule id="Q9QYI5-1"/>
</dbReference>
<dbReference type="ProteomicsDB" id="279745">
    <molecule id="Q9QYI5-2"/>
</dbReference>
<dbReference type="Pumba" id="Q9QYI5"/>
<dbReference type="Antibodypedia" id="34321">
    <property type="antibodies" value="363 antibodies from 32 providers"/>
</dbReference>
<dbReference type="DNASU" id="56812"/>
<dbReference type="Ensembl" id="ENSMUST00000055223.14">
    <molecule id="Q9QYI5-2"/>
    <property type="protein sequence ID" value="ENSMUSP00000052520.8"/>
    <property type="gene ID" value="ENSMUSG00000026203.17"/>
</dbReference>
<dbReference type="Ensembl" id="ENSMUST00000082158.13">
    <molecule id="Q9QYI5-1"/>
    <property type="protein sequence ID" value="ENSMUSP00000080796.7"/>
    <property type="gene ID" value="ENSMUSG00000026203.17"/>
</dbReference>
<dbReference type="Ensembl" id="ENSMUST00000187058.7">
    <molecule id="Q9QYI5-2"/>
    <property type="protein sequence ID" value="ENSMUSP00000140637.2"/>
    <property type="gene ID" value="ENSMUSG00000026203.17"/>
</dbReference>
<dbReference type="Ensembl" id="ENSMUST00000188290.7">
    <molecule id="Q9QYI5-1"/>
    <property type="protein sequence ID" value="ENSMUSP00000140634.2"/>
    <property type="gene ID" value="ENSMUSG00000026203.17"/>
</dbReference>
<dbReference type="Ensembl" id="ENSMUST00000188346.7">
    <molecule id="Q9QYI5-1"/>
    <property type="protein sequence ID" value="ENSMUSP00000140588.2"/>
    <property type="gene ID" value="ENSMUSG00000026203.17"/>
</dbReference>
<dbReference type="Ensembl" id="ENSMUST00000188931.7">
    <molecule id="Q9QYI5-3"/>
    <property type="protein sequence ID" value="ENSMUSP00000140566.2"/>
    <property type="gene ID" value="ENSMUSG00000026203.17"/>
</dbReference>
<dbReference type="GeneID" id="56812"/>
<dbReference type="KEGG" id="mmu:56812"/>
<dbReference type="UCSC" id="uc007bom.2">
    <molecule id="Q9QYI5-3"/>
    <property type="organism name" value="mouse"/>
</dbReference>
<dbReference type="UCSC" id="uc007bon.2">
    <property type="organism name" value="mouse"/>
</dbReference>
<dbReference type="UCSC" id="uc007bop.2">
    <molecule id="Q9QYI5-2"/>
    <property type="organism name" value="mouse"/>
</dbReference>
<dbReference type="AGR" id="MGI:1928739"/>
<dbReference type="CTD" id="3300"/>
<dbReference type="MGI" id="MGI:1928739">
    <property type="gene designation" value="Dnajb2"/>
</dbReference>
<dbReference type="VEuPathDB" id="HostDB:ENSMUSG00000026203"/>
<dbReference type="eggNOG" id="KOG0714">
    <property type="taxonomic scope" value="Eukaryota"/>
</dbReference>
<dbReference type="GeneTree" id="ENSGT00940000160220"/>
<dbReference type="HOGENOM" id="CLU_017633_12_0_1"/>
<dbReference type="InParanoid" id="Q9QYI5"/>
<dbReference type="OMA" id="HHRAGVF"/>
<dbReference type="OrthoDB" id="10250354at2759"/>
<dbReference type="TreeFam" id="TF105142"/>
<dbReference type="BioGRID-ORCS" id="56812">
    <property type="hits" value="0 hits in 78 CRISPR screens"/>
</dbReference>
<dbReference type="ChiTaRS" id="Dnajb2">
    <property type="organism name" value="mouse"/>
</dbReference>
<dbReference type="PRO" id="PR:Q9QYI5"/>
<dbReference type="Proteomes" id="UP000000589">
    <property type="component" value="Chromosome 1"/>
</dbReference>
<dbReference type="RNAct" id="Q9QYI5">
    <property type="molecule type" value="protein"/>
</dbReference>
<dbReference type="Bgee" id="ENSMUSG00000026203">
    <property type="expression patterns" value="Expressed in motor neuron and 264 other cell types or tissues"/>
</dbReference>
<dbReference type="ExpressionAtlas" id="Q9QYI5">
    <property type="expression patterns" value="baseline and differential"/>
</dbReference>
<dbReference type="GO" id="GO:0005737">
    <property type="term" value="C:cytoplasm"/>
    <property type="evidence" value="ECO:0000250"/>
    <property type="project" value="UniProtKB"/>
</dbReference>
<dbReference type="GO" id="GO:0005829">
    <property type="term" value="C:cytosol"/>
    <property type="evidence" value="ECO:0007669"/>
    <property type="project" value="Ensembl"/>
</dbReference>
<dbReference type="GO" id="GO:0005789">
    <property type="term" value="C:endoplasmic reticulum membrane"/>
    <property type="evidence" value="ECO:0000250"/>
    <property type="project" value="UniProtKB"/>
</dbReference>
<dbReference type="GO" id="GO:0031965">
    <property type="term" value="C:nuclear membrane"/>
    <property type="evidence" value="ECO:0007669"/>
    <property type="project" value="Ensembl"/>
</dbReference>
<dbReference type="GO" id="GO:0005634">
    <property type="term" value="C:nucleus"/>
    <property type="evidence" value="ECO:0000250"/>
    <property type="project" value="UniProtKB"/>
</dbReference>
<dbReference type="GO" id="GO:0001671">
    <property type="term" value="F:ATPase activator activity"/>
    <property type="evidence" value="ECO:0000250"/>
    <property type="project" value="UniProtKB"/>
</dbReference>
<dbReference type="GO" id="GO:0030544">
    <property type="term" value="F:Hsp70 protein binding"/>
    <property type="evidence" value="ECO:0000250"/>
    <property type="project" value="UniProtKB"/>
</dbReference>
<dbReference type="GO" id="GO:0031593">
    <property type="term" value="F:polyubiquitin modification-dependent protein binding"/>
    <property type="evidence" value="ECO:0000250"/>
    <property type="project" value="UniProtKB"/>
</dbReference>
<dbReference type="GO" id="GO:0120283">
    <property type="term" value="F:protein serine/threonine kinase binding"/>
    <property type="evidence" value="ECO:0007669"/>
    <property type="project" value="Ensembl"/>
</dbReference>
<dbReference type="GO" id="GO:0043130">
    <property type="term" value="F:ubiquitin binding"/>
    <property type="evidence" value="ECO:0007669"/>
    <property type="project" value="Ensembl"/>
</dbReference>
<dbReference type="GO" id="GO:0140036">
    <property type="term" value="F:ubiquitin-modified protein reader activity"/>
    <property type="evidence" value="ECO:0007669"/>
    <property type="project" value="Ensembl"/>
</dbReference>
<dbReference type="GO" id="GO:0051082">
    <property type="term" value="F:unfolded protein binding"/>
    <property type="evidence" value="ECO:0007669"/>
    <property type="project" value="Ensembl"/>
</dbReference>
<dbReference type="GO" id="GO:0061077">
    <property type="term" value="P:chaperone-mediated protein folding"/>
    <property type="evidence" value="ECO:0000250"/>
    <property type="project" value="UniProtKB"/>
</dbReference>
<dbReference type="GO" id="GO:0030308">
    <property type="term" value="P:negative regulation of cell growth"/>
    <property type="evidence" value="ECO:0000250"/>
    <property type="project" value="UniProtKB"/>
</dbReference>
<dbReference type="GO" id="GO:0008285">
    <property type="term" value="P:negative regulation of cell population proliferation"/>
    <property type="evidence" value="ECO:0000250"/>
    <property type="project" value="UniProtKB"/>
</dbReference>
<dbReference type="GO" id="GO:0090084">
    <property type="term" value="P:negative regulation of inclusion body assembly"/>
    <property type="evidence" value="ECO:0007669"/>
    <property type="project" value="Ensembl"/>
</dbReference>
<dbReference type="GO" id="GO:0032781">
    <property type="term" value="P:positive regulation of ATP-dependent activity"/>
    <property type="evidence" value="ECO:0000250"/>
    <property type="project" value="UniProtKB"/>
</dbReference>
<dbReference type="GO" id="GO:0043161">
    <property type="term" value="P:proteasome-mediated ubiquitin-dependent protein catabolic process"/>
    <property type="evidence" value="ECO:0000250"/>
    <property type="project" value="UniProtKB"/>
</dbReference>
<dbReference type="GO" id="GO:0042026">
    <property type="term" value="P:protein refolding"/>
    <property type="evidence" value="ECO:0007669"/>
    <property type="project" value="Ensembl"/>
</dbReference>
<dbReference type="GO" id="GO:1903644">
    <property type="term" value="P:regulation of chaperone-mediated protein folding"/>
    <property type="evidence" value="ECO:0000250"/>
    <property type="project" value="UniProtKB"/>
</dbReference>
<dbReference type="GO" id="GO:0031396">
    <property type="term" value="P:regulation of protein ubiquitination"/>
    <property type="evidence" value="ECO:0000250"/>
    <property type="project" value="UniProtKB"/>
</dbReference>
<dbReference type="CDD" id="cd06257">
    <property type="entry name" value="DnaJ"/>
    <property type="match status" value="1"/>
</dbReference>
<dbReference type="FunFam" id="1.10.287.110:FF:000021">
    <property type="entry name" value="DnaJ (Hsp40) homolog, subfamily B, member 2"/>
    <property type="match status" value="1"/>
</dbReference>
<dbReference type="Gene3D" id="6.10.140.100">
    <property type="match status" value="1"/>
</dbReference>
<dbReference type="Gene3D" id="1.10.287.110">
    <property type="entry name" value="DnaJ domain"/>
    <property type="match status" value="1"/>
</dbReference>
<dbReference type="InterPro" id="IPR001623">
    <property type="entry name" value="DnaJ_domain"/>
</dbReference>
<dbReference type="InterPro" id="IPR018253">
    <property type="entry name" value="DnaJ_domain_CS"/>
</dbReference>
<dbReference type="InterPro" id="IPR043183">
    <property type="entry name" value="DNJB2/6-like"/>
</dbReference>
<dbReference type="InterPro" id="IPR036869">
    <property type="entry name" value="J_dom_sf"/>
</dbReference>
<dbReference type="InterPro" id="IPR003903">
    <property type="entry name" value="UIM_dom"/>
</dbReference>
<dbReference type="PANTHER" id="PTHR45168">
    <property type="entry name" value="DNAJ HOMOLOG SUBFAMILY B MEMBER 2"/>
    <property type="match status" value="1"/>
</dbReference>
<dbReference type="PANTHER" id="PTHR45168:SF1">
    <property type="entry name" value="DNAJ HOMOLOG SUBFAMILY B MEMBER 2"/>
    <property type="match status" value="1"/>
</dbReference>
<dbReference type="Pfam" id="PF00226">
    <property type="entry name" value="DnaJ"/>
    <property type="match status" value="1"/>
</dbReference>
<dbReference type="PRINTS" id="PR00625">
    <property type="entry name" value="JDOMAIN"/>
</dbReference>
<dbReference type="SMART" id="SM00271">
    <property type="entry name" value="DnaJ"/>
    <property type="match status" value="1"/>
</dbReference>
<dbReference type="SMART" id="SM00726">
    <property type="entry name" value="UIM"/>
    <property type="match status" value="2"/>
</dbReference>
<dbReference type="SUPFAM" id="SSF46565">
    <property type="entry name" value="Chaperone J-domain"/>
    <property type="match status" value="1"/>
</dbReference>
<dbReference type="PROSITE" id="PS00636">
    <property type="entry name" value="DNAJ_1"/>
    <property type="match status" value="1"/>
</dbReference>
<dbReference type="PROSITE" id="PS50076">
    <property type="entry name" value="DNAJ_2"/>
    <property type="match status" value="1"/>
</dbReference>
<dbReference type="PROSITE" id="PS50330">
    <property type="entry name" value="UIM"/>
    <property type="match status" value="1"/>
</dbReference>
<comment type="function">
    <text evidence="1">Functions as a co-chaperone, regulating the substrate binding and activating the ATPase activity of chaperones of the HSP70/heat shock protein 70 family. In parallel, also contributes to the ubiquitin-dependent proteasomal degradation of misfolded proteins. Thereby, may regulate the aggregation and promote the functional recovery of misfolded proteins like HTT, MC4R, PRKN, RHO and SOD1 and be crucial for many biological processes. Isoform 1 which is localized to the endoplasmic reticulum membranes may specifically function in ER-associated protein degradation of misfolded proteins.</text>
</comment>
<comment type="subunit">
    <text evidence="1">Interacts with HSP70 (HSPA1A or HSPA1B). Interacts with HSPA8/Hsc70. Interacts with PSMA3 and most probably with the whole proteasomal complex.</text>
</comment>
<comment type="subcellular location">
    <molecule>Isoform 2</molecule>
    <subcellularLocation>
        <location evidence="1">Cytoplasm</location>
    </subcellularLocation>
    <subcellularLocation>
        <location evidence="1">Nucleus</location>
    </subcellularLocation>
</comment>
<comment type="subcellular location">
    <molecule>Isoform 1</molecule>
    <subcellularLocation>
        <location evidence="1">Endoplasmic reticulum membrane</location>
        <topology evidence="1">Lipid-anchor</topology>
        <orientation evidence="1">Cytoplasmic side</orientation>
    </subcellularLocation>
</comment>
<comment type="alternative products">
    <event type="alternative splicing"/>
    <isoform>
        <id>Q9QYI5-3</id>
        <name>1</name>
        <sequence type="displayed"/>
    </isoform>
    <isoform>
        <id>Q9QYI5-1</id>
        <name>2</name>
        <sequence type="described" ref="VSP_058709 VSP_058710"/>
    </isoform>
    <isoform>
        <id>Q9QYI5-2</id>
        <name>3</name>
        <sequence type="described" ref="VSP_058708 VSP_058709 VSP_058710"/>
    </isoform>
</comment>
<comment type="domain">
    <text evidence="1">The J domain is sufficient to interact with HSP70 (HSPA1A or HSPA1B) and activate its ATPase activity. The J domain is also required for the HSP70-mediated and ubiquitin-dependent proteasomal degradation of proteins like ATXN3. The J domain is required to reduce PRKN cytoplasmic aggregation.</text>
</comment>
<comment type="domain">
    <text evidence="1">The UIM domains mediate interaction with ubiquitinated chaperone clients and with the proteasome. The UIM domains may have an opposite activity to the J domain, binding ubiquitinated proteins and protecting them from HSP70-mediated proteasomal degradation. The UIM domains are not required to reduce PRKN cytoplasmic aggregation.</text>
</comment>
<comment type="PTM">
    <text evidence="1">Ubiquitinated by STUB1; does not lead to proteasomal degradation.</text>
</comment>
<proteinExistence type="evidence at protein level"/>
<protein>
    <recommendedName>
        <fullName evidence="6">DnaJ homolog subfamily B member 2</fullName>
    </recommendedName>
    <alternativeName>
        <fullName evidence="5">DnaJ homolog subfamily B member 10</fullName>
    </alternativeName>
    <alternativeName>
        <fullName evidence="7">mDj8</fullName>
    </alternativeName>
</protein>
<gene>
    <name evidence="8" type="primary">Dnajb2</name>
    <name evidence="5" type="synonym">Dnajb10</name>
</gene>